<organism>
    <name type="scientific">Helicobacter pylori (strain ATCC 700392 / 26695)</name>
    <name type="common">Campylobacter pylori</name>
    <dbReference type="NCBI Taxonomy" id="85962"/>
    <lineage>
        <taxon>Bacteria</taxon>
        <taxon>Pseudomonadati</taxon>
        <taxon>Campylobacterota</taxon>
        <taxon>Epsilonproteobacteria</taxon>
        <taxon>Campylobacterales</taxon>
        <taxon>Helicobacteraceae</taxon>
        <taxon>Helicobacter</taxon>
    </lineage>
</organism>
<sequence>MKILVIQGPNLNMLGHRDPRLYGMVTLDQIHEIMQTFVKQGNLDVELEFFQTNFEGEIIDKIQESVGSDYEGIIINPGAFSHTSIAIADAIMLAGKPVIEVHLTNIQAREEFRKNSYTGAACGGVIMGFGPLGYNMALMAMVNILAEMKAFQEAQKNNPNNPINNQK</sequence>
<dbReference type="EC" id="4.2.1.10"/>
<dbReference type="EMBL" id="AE000511">
    <property type="protein sequence ID" value="AAD08081.1"/>
    <property type="molecule type" value="Genomic_DNA"/>
</dbReference>
<dbReference type="EMBL" id="X98878">
    <property type="protein sequence ID" value="CAA67380.1"/>
    <property type="molecule type" value="Genomic_DNA"/>
</dbReference>
<dbReference type="PIR" id="S72447">
    <property type="entry name" value="S72447"/>
</dbReference>
<dbReference type="RefSeq" id="NP_207828.1">
    <property type="nucleotide sequence ID" value="NC_000915.1"/>
</dbReference>
<dbReference type="RefSeq" id="WP_000699284.1">
    <property type="nucleotide sequence ID" value="NC_018939.1"/>
</dbReference>
<dbReference type="PDB" id="1J2Y">
    <property type="method" value="X-ray"/>
    <property type="resolution" value="2.60 A"/>
    <property type="chains" value="A=1-167"/>
</dbReference>
<dbReference type="PDB" id="2C4V">
    <property type="method" value="X-ray"/>
    <property type="resolution" value="2.50 A"/>
    <property type="chains" value="A=1-167"/>
</dbReference>
<dbReference type="PDB" id="2C4W">
    <property type="method" value="X-ray"/>
    <property type="resolution" value="1.55 A"/>
    <property type="chains" value="A=1-167"/>
</dbReference>
<dbReference type="PDB" id="2C57">
    <property type="method" value="X-ray"/>
    <property type="resolution" value="3.10 A"/>
    <property type="chains" value="A/B/C/D/E/F/G/H/I/J/K/L=1-167"/>
</dbReference>
<dbReference type="PDB" id="2WKS">
    <property type="method" value="X-ray"/>
    <property type="resolution" value="2.95 A"/>
    <property type="chains" value="A/B/C/D/E/F=1-167"/>
</dbReference>
<dbReference type="PDB" id="2XB9">
    <property type="method" value="X-ray"/>
    <property type="resolution" value="2.75 A"/>
    <property type="chains" value="A/B/C=1-167"/>
</dbReference>
<dbReference type="PDB" id="2XD9">
    <property type="method" value="X-ray"/>
    <property type="resolution" value="1.95 A"/>
    <property type="chains" value="A/B/C=1-167"/>
</dbReference>
<dbReference type="PDB" id="2XDA">
    <property type="method" value="X-ray"/>
    <property type="resolution" value="1.85 A"/>
    <property type="chains" value="A=1-167"/>
</dbReference>
<dbReference type="PDB" id="4B6R">
    <property type="method" value="X-ray"/>
    <property type="resolution" value="2.00 A"/>
    <property type="chains" value="A/B/C=1-167"/>
</dbReference>
<dbReference type="PDB" id="4B6S">
    <property type="method" value="X-ray"/>
    <property type="resolution" value="1.90 A"/>
    <property type="chains" value="A/B/C=1-167"/>
</dbReference>
<dbReference type="PDBsum" id="1J2Y"/>
<dbReference type="PDBsum" id="2C4V"/>
<dbReference type="PDBsum" id="2C4W"/>
<dbReference type="PDBsum" id="2C57"/>
<dbReference type="PDBsum" id="2WKS"/>
<dbReference type="PDBsum" id="2XB9"/>
<dbReference type="PDBsum" id="2XD9"/>
<dbReference type="PDBsum" id="2XDA"/>
<dbReference type="PDBsum" id="4B6R"/>
<dbReference type="PDBsum" id="4B6S"/>
<dbReference type="SMR" id="Q48255"/>
<dbReference type="DIP" id="DIP-3328N"/>
<dbReference type="IntAct" id="Q48255">
    <property type="interactions" value="2"/>
</dbReference>
<dbReference type="MINT" id="Q48255"/>
<dbReference type="STRING" id="85962.HP_1038"/>
<dbReference type="BindingDB" id="Q48255"/>
<dbReference type="ChEMBL" id="CHEMBL4680"/>
<dbReference type="DrugBank" id="DB03868">
    <property type="generic name" value="3-Dehydroquinic Acid"/>
</dbReference>
<dbReference type="DrugBank" id="DB04698">
    <property type="generic name" value="N-(1,4-dihydro-5H-tetrazol-5-ylidene)-9-oxo-9H-xanthene-2-sulfonamide"/>
</dbReference>
<dbReference type="DrugCentral" id="Q48255"/>
<dbReference type="PaxDb" id="85962-C694_05370"/>
<dbReference type="EnsemblBacteria" id="AAD08081">
    <property type="protein sequence ID" value="AAD08081"/>
    <property type="gene ID" value="HP_1038"/>
</dbReference>
<dbReference type="KEGG" id="heo:C694_05370"/>
<dbReference type="KEGG" id="hpy:HP_1038"/>
<dbReference type="PATRIC" id="fig|85962.47.peg.1117"/>
<dbReference type="eggNOG" id="COG0757">
    <property type="taxonomic scope" value="Bacteria"/>
</dbReference>
<dbReference type="InParanoid" id="Q48255"/>
<dbReference type="OrthoDB" id="9790793at2"/>
<dbReference type="PhylomeDB" id="Q48255"/>
<dbReference type="BRENDA" id="4.2.1.10">
    <property type="organism ID" value="2604"/>
</dbReference>
<dbReference type="UniPathway" id="UPA00053">
    <property type="reaction ID" value="UER00086"/>
</dbReference>
<dbReference type="EvolutionaryTrace" id="Q48255"/>
<dbReference type="PRO" id="PR:Q48255"/>
<dbReference type="Proteomes" id="UP000000429">
    <property type="component" value="Chromosome"/>
</dbReference>
<dbReference type="GO" id="GO:0003855">
    <property type="term" value="F:3-dehydroquinate dehydratase activity"/>
    <property type="evidence" value="ECO:0000318"/>
    <property type="project" value="GO_Central"/>
</dbReference>
<dbReference type="GO" id="GO:0008652">
    <property type="term" value="P:amino acid biosynthetic process"/>
    <property type="evidence" value="ECO:0007669"/>
    <property type="project" value="UniProtKB-KW"/>
</dbReference>
<dbReference type="GO" id="GO:0009073">
    <property type="term" value="P:aromatic amino acid family biosynthetic process"/>
    <property type="evidence" value="ECO:0007669"/>
    <property type="project" value="UniProtKB-KW"/>
</dbReference>
<dbReference type="GO" id="GO:0009423">
    <property type="term" value="P:chorismate biosynthetic process"/>
    <property type="evidence" value="ECO:0007669"/>
    <property type="project" value="UniProtKB-UniRule"/>
</dbReference>
<dbReference type="GO" id="GO:0019631">
    <property type="term" value="P:quinate catabolic process"/>
    <property type="evidence" value="ECO:0000318"/>
    <property type="project" value="GO_Central"/>
</dbReference>
<dbReference type="CDD" id="cd00466">
    <property type="entry name" value="DHQase_II"/>
    <property type="match status" value="1"/>
</dbReference>
<dbReference type="Gene3D" id="3.40.50.9100">
    <property type="entry name" value="Dehydroquinase, class II"/>
    <property type="match status" value="1"/>
</dbReference>
<dbReference type="HAMAP" id="MF_00169">
    <property type="entry name" value="AroQ"/>
    <property type="match status" value="1"/>
</dbReference>
<dbReference type="InterPro" id="IPR001874">
    <property type="entry name" value="DHquinase_II"/>
</dbReference>
<dbReference type="InterPro" id="IPR018509">
    <property type="entry name" value="DHquinase_II_CS"/>
</dbReference>
<dbReference type="InterPro" id="IPR036441">
    <property type="entry name" value="DHquinase_II_sf"/>
</dbReference>
<dbReference type="NCBIfam" id="TIGR01088">
    <property type="entry name" value="aroQ"/>
    <property type="match status" value="1"/>
</dbReference>
<dbReference type="NCBIfam" id="NF003805">
    <property type="entry name" value="PRK05395.1-2"/>
    <property type="match status" value="1"/>
</dbReference>
<dbReference type="NCBIfam" id="NF003806">
    <property type="entry name" value="PRK05395.1-3"/>
    <property type="match status" value="1"/>
</dbReference>
<dbReference type="NCBIfam" id="NF003807">
    <property type="entry name" value="PRK05395.1-4"/>
    <property type="match status" value="1"/>
</dbReference>
<dbReference type="PANTHER" id="PTHR21272">
    <property type="entry name" value="CATABOLIC 3-DEHYDROQUINASE"/>
    <property type="match status" value="1"/>
</dbReference>
<dbReference type="PANTHER" id="PTHR21272:SF3">
    <property type="entry name" value="CATABOLIC 3-DEHYDROQUINASE"/>
    <property type="match status" value="1"/>
</dbReference>
<dbReference type="Pfam" id="PF01220">
    <property type="entry name" value="DHquinase_II"/>
    <property type="match status" value="1"/>
</dbReference>
<dbReference type="PIRSF" id="PIRSF001399">
    <property type="entry name" value="DHquinase_II"/>
    <property type="match status" value="1"/>
</dbReference>
<dbReference type="SUPFAM" id="SSF52304">
    <property type="entry name" value="Type II 3-dehydroquinate dehydratase"/>
    <property type="match status" value="1"/>
</dbReference>
<dbReference type="PROSITE" id="PS01029">
    <property type="entry name" value="DEHYDROQUINASE_II"/>
    <property type="match status" value="1"/>
</dbReference>
<feature type="chain" id="PRO_0000159905" description="3-dehydroquinate dehydratase">
    <location>
        <begin position="1"/>
        <end position="167"/>
    </location>
</feature>
<feature type="active site" description="Proton acceptor">
    <location>
        <position position="22"/>
    </location>
</feature>
<feature type="active site" description="Proton donor">
    <location>
        <position position="102"/>
    </location>
</feature>
<feature type="binding site" evidence="2">
    <location>
        <position position="76"/>
    </location>
    <ligand>
        <name>substrate</name>
    </ligand>
</feature>
<feature type="binding site" evidence="2">
    <location>
        <position position="82"/>
    </location>
    <ligand>
        <name>substrate</name>
    </ligand>
</feature>
<feature type="binding site" evidence="2">
    <location>
        <position position="89"/>
    </location>
    <ligand>
        <name>substrate</name>
    </ligand>
</feature>
<feature type="binding site">
    <location>
        <begin position="103"/>
        <end position="104"/>
    </location>
    <ligand>
        <name>substrate</name>
    </ligand>
</feature>
<feature type="binding site" evidence="2">
    <location>
        <position position="113"/>
    </location>
    <ligand>
        <name>substrate</name>
    </ligand>
</feature>
<feature type="site" description="Transition state stabilizer">
    <location>
        <position position="17"/>
    </location>
</feature>
<feature type="sequence conflict" description="In Ref. 1; CAA67380." evidence="4" ref="1">
    <original>K</original>
    <variation>Q</variation>
    <location>
        <position position="156"/>
    </location>
</feature>
<feature type="strand" evidence="5">
    <location>
        <begin position="1"/>
        <end position="7"/>
    </location>
</feature>
<feature type="helix" evidence="5">
    <location>
        <begin position="11"/>
        <end position="13"/>
    </location>
</feature>
<feature type="turn" evidence="5">
    <location>
        <begin position="14"/>
        <end position="16"/>
    </location>
</feature>
<feature type="helix" evidence="5">
    <location>
        <begin position="20"/>
        <end position="22"/>
    </location>
</feature>
<feature type="helix" evidence="5">
    <location>
        <begin position="27"/>
        <end position="40"/>
    </location>
</feature>
<feature type="strand" evidence="5">
    <location>
        <begin position="45"/>
        <end position="51"/>
    </location>
</feature>
<feature type="helix" evidence="5">
    <location>
        <begin position="55"/>
        <end position="66"/>
    </location>
</feature>
<feature type="strand" evidence="5">
    <location>
        <begin position="67"/>
        <end position="69"/>
    </location>
</feature>
<feature type="strand" evidence="5">
    <location>
        <begin position="72"/>
        <end position="76"/>
    </location>
</feature>
<feature type="helix" evidence="5">
    <location>
        <begin position="78"/>
        <end position="82"/>
    </location>
</feature>
<feature type="helix" evidence="5">
    <location>
        <begin position="85"/>
        <end position="92"/>
    </location>
</feature>
<feature type="strand" evidence="5">
    <location>
        <begin position="94"/>
        <end position="96"/>
    </location>
</feature>
<feature type="strand" evidence="5">
    <location>
        <begin position="98"/>
        <end position="104"/>
    </location>
</feature>
<feature type="helix" evidence="5">
    <location>
        <begin position="106"/>
        <end position="108"/>
    </location>
</feature>
<feature type="helix" evidence="5">
    <location>
        <begin position="111"/>
        <end position="113"/>
    </location>
</feature>
<feature type="helix" evidence="5">
    <location>
        <begin position="117"/>
        <end position="121"/>
    </location>
</feature>
<feature type="strand" evidence="5">
    <location>
        <begin position="122"/>
        <end position="129"/>
    </location>
</feature>
<feature type="helix" evidence="5">
    <location>
        <begin position="132"/>
        <end position="151"/>
    </location>
</feature>
<feature type="turn" evidence="5">
    <location>
        <begin position="152"/>
        <end position="156"/>
    </location>
</feature>
<comment type="function">
    <text evidence="1">Catalyzes a trans-dehydration via an enolate intermediate.</text>
</comment>
<comment type="catalytic activity">
    <reaction>
        <text>3-dehydroquinate = 3-dehydroshikimate + H2O</text>
        <dbReference type="Rhea" id="RHEA:21096"/>
        <dbReference type="ChEBI" id="CHEBI:15377"/>
        <dbReference type="ChEBI" id="CHEBI:16630"/>
        <dbReference type="ChEBI" id="CHEBI:32364"/>
        <dbReference type="EC" id="4.2.1.10"/>
    </reaction>
</comment>
<comment type="pathway">
    <text>Metabolic intermediate biosynthesis; chorismate biosynthesis; chorismate from D-erythrose 4-phosphate and phosphoenolpyruvate: step 3/7.</text>
</comment>
<comment type="subunit">
    <text evidence="2 3">Homododecamer.</text>
</comment>
<comment type="similarity">
    <text evidence="4">Belongs to the type-II 3-dehydroquinase family.</text>
</comment>
<gene>
    <name type="primary">aroQ</name>
    <name type="ordered locus">HP_1038</name>
</gene>
<protein>
    <recommendedName>
        <fullName>3-dehydroquinate dehydratase</fullName>
        <shortName>3-dehydroquinase</shortName>
        <ecNumber>4.2.1.10</ecNumber>
    </recommendedName>
    <alternativeName>
        <fullName>Type II DHQase</fullName>
    </alternativeName>
</protein>
<evidence type="ECO:0000250" key="1"/>
<evidence type="ECO:0000269" key="2">
    <source>
    </source>
</evidence>
<evidence type="ECO:0000269" key="3">
    <source>
    </source>
</evidence>
<evidence type="ECO:0000305" key="4"/>
<evidence type="ECO:0007829" key="5">
    <source>
        <dbReference type="PDB" id="2C4W"/>
    </source>
</evidence>
<reference key="1">
    <citation type="journal article" date="1996" name="Biochem. J.">
        <title>Cloning, sequencing, expression, purification and preliminary characterization of a type II dehydroquinase from Helicobacter pylori.</title>
        <authorList>
            <person name="Bottomley J.R."/>
            <person name="Clayton C.L."/>
            <person name="Chalk P.A."/>
            <person name="Kleanthous C."/>
        </authorList>
    </citation>
    <scope>NUCLEOTIDE SEQUENCE [GENOMIC DNA]</scope>
    <scope>PARTIAL PROTEIN SEQUENCE</scope>
    <source>
        <strain>ATCC 43504 / NCTC 11637 / JCM 7653 / RPH 13487</strain>
    </source>
</reference>
<reference key="2">
    <citation type="journal article" date="1997" name="Nature">
        <title>The complete genome sequence of the gastric pathogen Helicobacter pylori.</title>
        <authorList>
            <person name="Tomb J.-F."/>
            <person name="White O."/>
            <person name="Kerlavage A.R."/>
            <person name="Clayton R.A."/>
            <person name="Sutton G.G."/>
            <person name="Fleischmann R.D."/>
            <person name="Ketchum K.A."/>
            <person name="Klenk H.-P."/>
            <person name="Gill S.R."/>
            <person name="Dougherty B.A."/>
            <person name="Nelson K.E."/>
            <person name="Quackenbush J."/>
            <person name="Zhou L."/>
            <person name="Kirkness E.F."/>
            <person name="Peterson S.N."/>
            <person name="Loftus B.J."/>
            <person name="Richardson D.L."/>
            <person name="Dodson R.J."/>
            <person name="Khalak H.G."/>
            <person name="Glodek A."/>
            <person name="McKenney K."/>
            <person name="FitzGerald L.M."/>
            <person name="Lee N."/>
            <person name="Adams M.D."/>
            <person name="Hickey E.K."/>
            <person name="Berg D.E."/>
            <person name="Gocayne J.D."/>
            <person name="Utterback T.R."/>
            <person name="Peterson J.D."/>
            <person name="Kelley J.M."/>
            <person name="Cotton M.D."/>
            <person name="Weidman J.F."/>
            <person name="Fujii C."/>
            <person name="Bowman C."/>
            <person name="Watthey L."/>
            <person name="Wallin E."/>
            <person name="Hayes W.S."/>
            <person name="Borodovsky M."/>
            <person name="Karp P.D."/>
            <person name="Smith H.O."/>
            <person name="Fraser C.M."/>
            <person name="Venter J.C."/>
        </authorList>
    </citation>
    <scope>NUCLEOTIDE SEQUENCE [LARGE SCALE GENOMIC DNA]</scope>
    <source>
        <strain>ATCC 700392 / 26695</strain>
    </source>
</reference>
<reference key="3">
    <citation type="journal article" date="2003" name="Proteins">
        <title>Crystal structure of the type II 3-dehydroquinase from Helicobacter pylori.</title>
        <authorList>
            <person name="Lee B.I."/>
            <person name="Kwak J.E."/>
            <person name="Suh S.W."/>
        </authorList>
    </citation>
    <scope>X-RAY CRYSTALLOGRAPHY (2.6 ANGSTROMS) OF 10-167 IN COMPLEX WITH SUBSTRATE</scope>
    <scope>SUBUNIT</scope>
</reference>
<reference key="4">
    <citation type="journal article" date="2006" name="J. Med. Chem.">
        <title>Crystal structures of Helicobacter pylori type II dehydroquinase inhibitor complexes: new directions for inhibitor design.</title>
        <authorList>
            <person name="Robinson D.A."/>
            <person name="Stewart K.A."/>
            <person name="Price N.C."/>
            <person name="Chalk P.A."/>
            <person name="Coggins J.R."/>
            <person name="Lapthorn A.J."/>
        </authorList>
    </citation>
    <scope>X-RAY CRYSTALLOGRAPHY (1.5 ANGSTROMS) IN COMPLEXES WITH SUBSTRATE ANALOGS</scope>
    <scope>SUBUNIT</scope>
</reference>
<name>AROQ_HELPY</name>
<accession>Q48255</accession>
<keyword id="KW-0002">3D-structure</keyword>
<keyword id="KW-0028">Amino-acid biosynthesis</keyword>
<keyword id="KW-0057">Aromatic amino acid biosynthesis</keyword>
<keyword id="KW-0903">Direct protein sequencing</keyword>
<keyword id="KW-0456">Lyase</keyword>
<keyword id="KW-1185">Reference proteome</keyword>
<proteinExistence type="evidence at protein level"/>